<protein>
    <recommendedName>
        <fullName>Hepatocyte growth factor receptor</fullName>
        <shortName>HGF receptor</shortName>
        <ecNumber>2.7.10.1</ecNumber>
    </recommendedName>
    <alternativeName>
        <fullName>HGF/SF receptor</fullName>
    </alternativeName>
    <alternativeName>
        <fullName>Proto-oncogene c-Met</fullName>
    </alternativeName>
    <alternativeName>
        <fullName>Scatter factor receptor</fullName>
        <shortName>SF receptor</shortName>
    </alternativeName>
    <alternativeName>
        <fullName>Tyrosine-protein kinase Met</fullName>
    </alternativeName>
</protein>
<gene>
    <name type="primary">MET</name>
</gene>
<proteinExistence type="evidence at protein level"/>
<keyword id="KW-0067">ATP-binding</keyword>
<keyword id="KW-1015">Disulfide bond</keyword>
<keyword id="KW-0325">Glycoprotein</keyword>
<keyword id="KW-0418">Kinase</keyword>
<keyword id="KW-0472">Membrane</keyword>
<keyword id="KW-0547">Nucleotide-binding</keyword>
<keyword id="KW-0597">Phosphoprotein</keyword>
<keyword id="KW-0656">Proto-oncogene</keyword>
<keyword id="KW-0675">Receptor</keyword>
<keyword id="KW-1185">Reference proteome</keyword>
<keyword id="KW-0677">Repeat</keyword>
<keyword id="KW-0732">Signal</keyword>
<keyword id="KW-0808">Transferase</keyword>
<keyword id="KW-0812">Transmembrane</keyword>
<keyword id="KW-1133">Transmembrane helix</keyword>
<keyword id="KW-0829">Tyrosine-protein kinase</keyword>
<keyword id="KW-0832">Ubl conjugation</keyword>
<name>MET_CANLF</name>
<comment type="function">
    <text evidence="1 9">Receptor tyrosine kinase that transduces signals from the extracellular matrix into the cytoplasm by binding to hepatocyte growth factor/HGF ligand. Regulates many physiological processes including proliferation, scattering, morphogenesis and survival. Ligand binding at the cell surface induces autophosphorylation of MET on its intracellular domain that provides docking sites for downstream signaling molecules. Following activation by ligand, interacts with the PI3-kinase subunit PIK3R1, PLCG1, SRC, GRB2, STAT3 or the adapter GAB1. Recruitment of these downstream effectors by MET leads to the activation of several signaling cascades including the RAS-ERK, PI3 kinase-AKT, or PLCgamma-PKC. The RAS-ERK activation is associated with the morphogenetic effects while PI3K/AKT coordinates prosurvival effects. During embryonic development, MET signaling plays a role in gastrulation, development and migration of muscles and neuronal precursors, angiogenesis and kidney formation. In adults, participates in wound healing as well as organ regeneration and tissue remodeling. Also promotes differentiation and proliferation of hematopoietic cells (By similarity).</text>
</comment>
<comment type="function">
    <text evidence="11">(Microbial infection) Acts as a receptor for Listeria monocytogenes internalin InlB, mediating entry of the pathogen into cells.</text>
</comment>
<comment type="catalytic activity">
    <reaction evidence="7">
        <text>L-tyrosyl-[protein] + ATP = O-phospho-L-tyrosyl-[protein] + ADP + H(+)</text>
        <dbReference type="Rhea" id="RHEA:10596"/>
        <dbReference type="Rhea" id="RHEA-COMP:10136"/>
        <dbReference type="Rhea" id="RHEA-COMP:20101"/>
        <dbReference type="ChEBI" id="CHEBI:15378"/>
        <dbReference type="ChEBI" id="CHEBI:30616"/>
        <dbReference type="ChEBI" id="CHEBI:46858"/>
        <dbReference type="ChEBI" id="CHEBI:61978"/>
        <dbReference type="ChEBI" id="CHEBI:456216"/>
        <dbReference type="EC" id="2.7.10.1"/>
    </reaction>
</comment>
<comment type="activity regulation">
    <text evidence="1">In its inactive state, the C-terminal tail interacts with the catalytic domain and inhibits the kinase activity. Upon ligand binding, the C-terminal tail is displaced and becomes phosphorylated, thus increasing the kinase activity (By similarity).</text>
</comment>
<comment type="subunit">
    <text evidence="2 3">Heterodimer made of an alpha chain (50 kDa) and a beta chain (145 kDa) which are disulfide linked. Binds PLXNB1. Interacts when phosphorylated with downstream effectors including STAT3, PIK3R1, SRC, PCLG1, GRB2 and GAB1. Interacts with SPSB1, SPSB2 and SPSB4. Interacts with INPP5D/SHIP1. When phosphorylated at Tyr-1357, interacts with INPPL1/SHIP2. Interacts with RANBP9 and RANBP10, as well as SPSB1, SPSB2, SPSB3 and SPSB4. SPSB1 binding occurs in the presence and in the absence of HGF, however HGF treatment has a positive effect on this interaction. Interacts with MUC20; prevents interaction with GRB2 and suppresses hepatocyte growth factor-induced cell proliferation. Interacts with GRB10. Interacts with PTPN1 and PTPN2. Interacts with HSP90AA1 and HSP90AB1; the interaction suppresses MET kinase activity. Interacts with tensin TNS3 (By similarity). Interacts (when phosphorylated) with tensin TNS4 (via SH2 domain); the interaction increases MET protein stability by inhibiting MET endocytosis and subsequent lysosomal degradation (By similarity).</text>
</comment>
<comment type="subunit">
    <text evidence="10 11">(Microbial infection) Interacts with L.monocytogenes InlB (Probable). InlB probably dimerizes upon binding to MET, which encourages subsequent dimerization of MET (Probable).</text>
</comment>
<comment type="subcellular location">
    <subcellularLocation>
        <location evidence="1">Membrane</location>
        <topology evidence="1">Single-pass type I membrane protein</topology>
    </subcellularLocation>
</comment>
<comment type="domain">
    <text evidence="1">The kinase domain is involved in SPSB1 binding.</text>
</comment>
<comment type="domain">
    <text evidence="1">The beta-propeller Sema domain mediates binding to HGF.</text>
</comment>
<comment type="PTM">
    <text evidence="2">Autophosphorylated in response to ligand binding on Tyr-1235 and Tyr-1236 in the kinase domain leading to further phosphorylation of Tyr-1350 and Tyr-1357 in the C-terminal multifunctional docking site. Dephosphorylated by PTPRJ at Tyr-1350 and Tyr-1366. Dephosphorylated by PTPN1 and PTPN2 (By similarity).</text>
</comment>
<comment type="PTM">
    <text evidence="2">Ubiquitinated. Ubiquitination by CBL regulates the receptor stability and activity through proteasomal degradation (By similarity).</text>
</comment>
<comment type="PTM">
    <text evidence="8">(Microbial infection) Tyrosine phosphorylation is stimulated by L.monocytogenes InlB.</text>
</comment>
<comment type="PTM">
    <text evidence="2">O-mannosylation of IPT/TIG domains by TMEM260 is required for protein maturation. O-mannosylated residues are composed of single mannose glycans that are not elongated or modified.</text>
</comment>
<comment type="similarity">
    <text evidence="5">Belongs to the protein kinase superfamily. Tyr protein kinase family.</text>
</comment>
<sequence>MKAPAVLAPGILVLLFTLVQKSYGECKEALVKSEMNVNMKYQLPNFTAETPIQNVVLHKHHIYLGAVNYIYVLNDKDLQKVAEYKTGPVLEHPDCSPCQDCSHKANLSGGVWEDNINMALLVDTYYDDQLISCGSVHRGTCQRHILPPSNIADIQSEVHCMYSSQADEEPSQCPDCVVSALGTKVLISEKDRFINFFVGNTINSSDHPDHSLHSISVRRLKETQDGFKFLTDQSYIDVLPEFRDSYPIKYVHAFESNHFIYFLTVQRETLDAQTFHTRIIRFCSVDSGLHSYMEMPLECILTEKRRKRSTREEVFNILQAAYVSKPGAHLAKQIGANLNDDILYGVFAQSKPDSAEPMNRSAVCAFPIKYVNEFFNKIVNKNNVRCLQHFYGPNHEHCFNRTLLRNSSGCEARNDEYRTEFTTALQRVDLFMGQFNQVLLTSISTFIKGDLTIANLGTSEGRFMQVVVSRSGLSTPHVNFRLDSHPVSPEAIVEHPLNQNGYTLVVTGKKITRIPLNGLGCEHFQSCSQCLSAPPFVQCGWCHDRCVHLEECPTGAWTQEVCLPAIYEVFPTSAPLEGGTVLTVCGWDFGFRRNNKFDLKKTKVFLGNESCTLTLSESTTNMLKCTVGPAVNEHFNISIIISNGRGTAQYSTFSYVDPIITSISPSYGPKNGGTLLTLTGKYLNSGNSRHISMGGKTCTLKSVSDSILECYTPAQATATEFPIKLKIDLANREMNSFSYQEDPIVYAIHPTKSFISGGSTITAVGKNLNSVSVLRMVIDVHETRRNFTVACQHRSNSEIICCTTPSLQQLNLQLPLKTKAFFMLDGIHSKYFDLIYVHNPVFKPFEKPVMISIGNENVLEIKGNDIDPEAVKGEVLKVGNKSCETIYSDSKAVLCKVPNDLLKLNNELNIEWKQAVSSTVLGKVIVQPDQNFTGLIAGVISISTIVLLLLGLFLWLKRKKQIKDLGSELVRYDARVHTPHLDRLVSARSVSPTTEMVSNESVDYRATFPEDQFPNSSQNGSCRQVQYPLTDLSPMLTSGDSDISSPLLQNTVHIDLSALNPELVQAVQHVVIGPSSLIVHFNEVIGRGHFGCVYHGTLLDNDDKKIHCAVKSLNRITDIGEVSQFLTEGIIMKDFSHPNVLSLLGICLRSEGSPLVVLPYMKHGDLRNFIRNETHNPTVKDLIGFGLQVAKGMKYLASKKFVHRDLAARNCMLDEKFTVKVADFGLARDMYDKEYYSVHNKTGAKLPVKWMALESLQTQKFTTKSDVWSFGVLLWELMTRGAPPYPDVNTFDITVYLLQGRRLLQPEYCPDPLYEVMLKCWHPRAELRPSFSELVSRISAIFSTFIGEHYVHVNATYVNVKCVAPYPSLLSSQDNIDGEGDT</sequence>
<reference key="1">
    <citation type="submission" date="2003-08" db="EMBL/GenBank/DDBJ databases">
        <title>Morecular cloning of the canine c-Met/HGF receptor and it's expression in normal canine tissues.</title>
        <authorList>
            <person name="Neo S."/>
            <person name="Furuichi M."/>
            <person name="Watanabe M."/>
            <person name="Hisasue M."/>
            <person name="Tsuchiya R."/>
            <person name="Hisamatsu S."/>
            <person name="Kansaku N."/>
            <person name="Yamada T."/>
        </authorList>
    </citation>
    <scope>NUCLEOTIDE SEQUENCE [MRNA]</scope>
</reference>
<reference key="2">
    <citation type="submission" date="2004-02" db="EMBL/GenBank/DDBJ databases">
        <title>Characterization of the receptor tyrosine kinase Met and its autocrine loop in canine osteosarcoma cell lines.</title>
        <authorList>
            <person name="Liao A.T."/>
            <person name="Chien M.B."/>
            <person name="London C.A."/>
        </authorList>
    </citation>
    <scope>NUCLEOTIDE SEQUENCE [MRNA]</scope>
</reference>
<reference key="3">
    <citation type="journal article" date="2003" name="Nature">
        <title>Comparative analyses of multi-species sequences from targeted genomic regions.</title>
        <authorList>
            <person name="Thomas J.W."/>
            <person name="Touchman J.W."/>
            <person name="Blakesley R.W."/>
            <person name="Bouffard G.G."/>
            <person name="Beckstrom-Sternberg S.M."/>
            <person name="Margulies E.H."/>
            <person name="Blanchette M."/>
            <person name="Siepel A.C."/>
            <person name="Thomas P.J."/>
            <person name="McDowell J.C."/>
            <person name="Maskeri B."/>
            <person name="Hansen N.F."/>
            <person name="Schwartz M.S."/>
            <person name="Weber R.J."/>
            <person name="Kent W.J."/>
            <person name="Karolchik D."/>
            <person name="Bruen T.C."/>
            <person name="Bevan R."/>
            <person name="Cutler D.J."/>
            <person name="Schwartz S."/>
            <person name="Elnitski L."/>
            <person name="Idol J.R."/>
            <person name="Prasad A.B."/>
            <person name="Lee-Lin S.-Q."/>
            <person name="Maduro V.V.B."/>
            <person name="Summers T.J."/>
            <person name="Portnoy M.E."/>
            <person name="Dietrich N.L."/>
            <person name="Akhter N."/>
            <person name="Ayele K."/>
            <person name="Benjamin B."/>
            <person name="Cariaga K."/>
            <person name="Brinkley C.P."/>
            <person name="Brooks S.Y."/>
            <person name="Granite S."/>
            <person name="Guan X."/>
            <person name="Gupta J."/>
            <person name="Haghighi P."/>
            <person name="Ho S.-L."/>
            <person name="Huang M.C."/>
            <person name="Karlins E."/>
            <person name="Laric P.L."/>
            <person name="Legaspi R."/>
            <person name="Lim M.J."/>
            <person name="Maduro Q.L."/>
            <person name="Masiello C.A."/>
            <person name="Mastrian S.D."/>
            <person name="McCloskey J.C."/>
            <person name="Pearson R."/>
            <person name="Stantripop S."/>
            <person name="Tiongson E.E."/>
            <person name="Tran J.T."/>
            <person name="Tsurgeon C."/>
            <person name="Vogt J.L."/>
            <person name="Walker M.A."/>
            <person name="Wetherby K.D."/>
            <person name="Wiggins L.S."/>
            <person name="Young A.C."/>
            <person name="Zhang L.-H."/>
            <person name="Osoegawa K."/>
            <person name="Zhu B."/>
            <person name="Zhao B."/>
            <person name="Shu C.L."/>
            <person name="De Jong P.J."/>
            <person name="Lawrence C.E."/>
            <person name="Smit A.F."/>
            <person name="Chakravarti A."/>
            <person name="Haussler D."/>
            <person name="Green P."/>
            <person name="Miller W."/>
            <person name="Green E.D."/>
        </authorList>
    </citation>
    <scope>NUCLEOTIDE SEQUENCE [LARGE SCALE GENOMIC DNA]</scope>
</reference>
<reference key="4">
    <citation type="journal article" date="1994" name="Dev. Biol.">
        <title>Involvement of hepatocyte growth factor in kidney development.</title>
        <authorList>
            <person name="Santos O.F."/>
            <person name="Barros E.J."/>
            <person name="Yang X.M."/>
            <person name="Matsumoto K."/>
            <person name="Nakamura T."/>
            <person name="Park M."/>
            <person name="Nigam S.K."/>
        </authorList>
    </citation>
    <scope>FUNCTION IN KIDNEY DEVELOPMENT</scope>
</reference>
<reference key="5">
    <citation type="journal article" date="2000" name="Cell">
        <title>InIB-dependent internalization of Listeria is mediated by the Met receptor tyrosine kinase.</title>
        <authorList>
            <person name="Shen Y."/>
            <person name="Naujokas M."/>
            <person name="Park M."/>
            <person name="Ireton K."/>
        </authorList>
    </citation>
    <scope>FUNCTION (MICROBIAL INFECTION)</scope>
    <scope>PHOSPHORYLATION (MICROBIAL INFECTION)</scope>
</reference>
<organism>
    <name type="scientific">Canis lupus familiaris</name>
    <name type="common">Dog</name>
    <name type="synonym">Canis familiaris</name>
    <dbReference type="NCBI Taxonomy" id="9615"/>
    <lineage>
        <taxon>Eukaryota</taxon>
        <taxon>Metazoa</taxon>
        <taxon>Chordata</taxon>
        <taxon>Craniata</taxon>
        <taxon>Vertebrata</taxon>
        <taxon>Euteleostomi</taxon>
        <taxon>Mammalia</taxon>
        <taxon>Eutheria</taxon>
        <taxon>Laurasiatheria</taxon>
        <taxon>Carnivora</taxon>
        <taxon>Caniformia</taxon>
        <taxon>Canidae</taxon>
        <taxon>Canis</taxon>
    </lineage>
</organism>
<dbReference type="EC" id="2.7.10.1"/>
<dbReference type="EMBL" id="AB118945">
    <property type="protein sequence ID" value="BAC84966.1"/>
    <property type="molecule type" value="mRNA"/>
</dbReference>
<dbReference type="EMBL" id="AY543631">
    <property type="protein sequence ID" value="AAS48569.1"/>
    <property type="molecule type" value="mRNA"/>
</dbReference>
<dbReference type="EMBL" id="DP000236">
    <property type="protein sequence ID" value="AAR16267.1"/>
    <property type="molecule type" value="Genomic_DNA"/>
</dbReference>
<dbReference type="RefSeq" id="NP_001002963.1">
    <property type="nucleotide sequence ID" value="NM_001002963.1"/>
</dbReference>
<dbReference type="SMR" id="Q75ZY9"/>
<dbReference type="FunCoup" id="Q75ZY9">
    <property type="interactions" value="291"/>
</dbReference>
<dbReference type="STRING" id="9615.ENSCAFP00000041478"/>
<dbReference type="BindingDB" id="Q75ZY9"/>
<dbReference type="ChEMBL" id="CHEMBL2046265"/>
<dbReference type="GlyCosmos" id="Q75ZY9">
    <property type="glycosylation" value="11 sites, No reported glycans"/>
</dbReference>
<dbReference type="PaxDb" id="9612-ENSCAFP00000041478"/>
<dbReference type="GeneID" id="403438"/>
<dbReference type="KEGG" id="cfa:403438"/>
<dbReference type="CTD" id="4233"/>
<dbReference type="eggNOG" id="KOG1095">
    <property type="taxonomic scope" value="Eukaryota"/>
</dbReference>
<dbReference type="eggNOG" id="KOG3610">
    <property type="taxonomic scope" value="Eukaryota"/>
</dbReference>
<dbReference type="InParanoid" id="Q75ZY9"/>
<dbReference type="OrthoDB" id="9985181at2759"/>
<dbReference type="PRO" id="PR:Q75ZY9"/>
<dbReference type="Proteomes" id="UP000002254">
    <property type="component" value="Unplaced"/>
</dbReference>
<dbReference type="Proteomes" id="UP000694429">
    <property type="component" value="Unplaced"/>
</dbReference>
<dbReference type="Proteomes" id="UP000694542">
    <property type="component" value="Unplaced"/>
</dbReference>
<dbReference type="Proteomes" id="UP000805418">
    <property type="component" value="Unplaced"/>
</dbReference>
<dbReference type="GO" id="GO:0009925">
    <property type="term" value="C:basal plasma membrane"/>
    <property type="evidence" value="ECO:0000318"/>
    <property type="project" value="GO_Central"/>
</dbReference>
<dbReference type="GO" id="GO:0005886">
    <property type="term" value="C:plasma membrane"/>
    <property type="evidence" value="ECO:0000318"/>
    <property type="project" value="GO_Central"/>
</dbReference>
<dbReference type="GO" id="GO:0043235">
    <property type="term" value="C:receptor complex"/>
    <property type="evidence" value="ECO:0000318"/>
    <property type="project" value="GO_Central"/>
</dbReference>
<dbReference type="GO" id="GO:0005524">
    <property type="term" value="F:ATP binding"/>
    <property type="evidence" value="ECO:0007669"/>
    <property type="project" value="UniProtKB-KW"/>
</dbReference>
<dbReference type="GO" id="GO:0005008">
    <property type="term" value="F:hepatocyte growth factor receptor activity"/>
    <property type="evidence" value="ECO:0000318"/>
    <property type="project" value="GO_Central"/>
</dbReference>
<dbReference type="GO" id="GO:0017154">
    <property type="term" value="F:semaphorin receptor activity"/>
    <property type="evidence" value="ECO:0007669"/>
    <property type="project" value="InterPro"/>
</dbReference>
<dbReference type="GO" id="GO:0007169">
    <property type="term" value="P:cell surface receptor protein tyrosine kinase signaling pathway"/>
    <property type="evidence" value="ECO:0000318"/>
    <property type="project" value="GO_Central"/>
</dbReference>
<dbReference type="GO" id="GO:0001889">
    <property type="term" value="P:liver development"/>
    <property type="evidence" value="ECO:0000318"/>
    <property type="project" value="GO_Central"/>
</dbReference>
<dbReference type="GO" id="GO:0030182">
    <property type="term" value="P:neuron differentiation"/>
    <property type="evidence" value="ECO:0000318"/>
    <property type="project" value="GO_Central"/>
</dbReference>
<dbReference type="GO" id="GO:0031016">
    <property type="term" value="P:pancreas development"/>
    <property type="evidence" value="ECO:0000318"/>
    <property type="project" value="GO_Central"/>
</dbReference>
<dbReference type="GO" id="GO:0050918">
    <property type="term" value="P:positive chemotaxis"/>
    <property type="evidence" value="ECO:0000250"/>
    <property type="project" value="UniProtKB"/>
</dbReference>
<dbReference type="GO" id="GO:2001028">
    <property type="term" value="P:positive regulation of endothelial cell chemotaxis"/>
    <property type="evidence" value="ECO:0000250"/>
    <property type="project" value="UniProtKB"/>
</dbReference>
<dbReference type="GO" id="GO:0071526">
    <property type="term" value="P:semaphorin-plexin signaling pathway"/>
    <property type="evidence" value="ECO:0000250"/>
    <property type="project" value="UniProtKB"/>
</dbReference>
<dbReference type="CDD" id="cd00603">
    <property type="entry name" value="IPT_PCSR"/>
    <property type="match status" value="1"/>
</dbReference>
<dbReference type="CDD" id="cd01180">
    <property type="entry name" value="IPT_plexin_repeat1"/>
    <property type="match status" value="1"/>
</dbReference>
<dbReference type="CDD" id="cd01179">
    <property type="entry name" value="IPT_plexin_repeat2"/>
    <property type="match status" value="1"/>
</dbReference>
<dbReference type="CDD" id="cd05058">
    <property type="entry name" value="PTKc_Met_Ron"/>
    <property type="match status" value="1"/>
</dbReference>
<dbReference type="CDD" id="cd11278">
    <property type="entry name" value="Sema_MET"/>
    <property type="match status" value="1"/>
</dbReference>
<dbReference type="FunFam" id="1.10.510.10:FF:000093">
    <property type="entry name" value="Hepatocyte growth factor receptor"/>
    <property type="match status" value="1"/>
</dbReference>
<dbReference type="FunFam" id="2.130.10.10:FF:000088">
    <property type="entry name" value="Hepatocyte growth factor receptor"/>
    <property type="match status" value="1"/>
</dbReference>
<dbReference type="FunFam" id="2.60.40.10:FF:000213">
    <property type="entry name" value="Hepatocyte growth factor receptor"/>
    <property type="match status" value="1"/>
</dbReference>
<dbReference type="FunFam" id="2.60.40.10:FF:000400">
    <property type="entry name" value="Hepatocyte growth factor receptor"/>
    <property type="match status" value="1"/>
</dbReference>
<dbReference type="FunFam" id="2.60.40.10:FF:002708">
    <property type="entry name" value="Hepatocyte growth factor receptor"/>
    <property type="match status" value="1"/>
</dbReference>
<dbReference type="FunFam" id="3.30.200.20:FF:000188">
    <property type="entry name" value="Hepatocyte growth factor receptor"/>
    <property type="match status" value="1"/>
</dbReference>
<dbReference type="FunFam" id="3.30.1680.10:FF:000006">
    <property type="entry name" value="Macrophage-stimulating 1 receptor b"/>
    <property type="match status" value="1"/>
</dbReference>
<dbReference type="Gene3D" id="2.60.40.10">
    <property type="entry name" value="Immunoglobulins"/>
    <property type="match status" value="3"/>
</dbReference>
<dbReference type="Gene3D" id="3.30.200.20">
    <property type="entry name" value="Phosphorylase Kinase, domain 1"/>
    <property type="match status" value="1"/>
</dbReference>
<dbReference type="Gene3D" id="1.10.510.10">
    <property type="entry name" value="Transferase(Phosphotransferase) domain 1"/>
    <property type="match status" value="1"/>
</dbReference>
<dbReference type="Gene3D" id="2.130.10.10">
    <property type="entry name" value="YVTN repeat-like/Quinoprotein amine dehydrogenase"/>
    <property type="match status" value="1"/>
</dbReference>
<dbReference type="InterPro" id="IPR013783">
    <property type="entry name" value="Ig-like_fold"/>
</dbReference>
<dbReference type="InterPro" id="IPR014756">
    <property type="entry name" value="Ig_E-set"/>
</dbReference>
<dbReference type="InterPro" id="IPR002909">
    <property type="entry name" value="IPT_dom"/>
</dbReference>
<dbReference type="InterPro" id="IPR011009">
    <property type="entry name" value="Kinase-like_dom_sf"/>
</dbReference>
<dbReference type="InterPro" id="IPR031148">
    <property type="entry name" value="Plexin"/>
</dbReference>
<dbReference type="InterPro" id="IPR002165">
    <property type="entry name" value="Plexin_repeat"/>
</dbReference>
<dbReference type="InterPro" id="IPR000719">
    <property type="entry name" value="Prot_kinase_dom"/>
</dbReference>
<dbReference type="InterPro" id="IPR017441">
    <property type="entry name" value="Protein_kinase_ATP_BS"/>
</dbReference>
<dbReference type="InterPro" id="IPR016201">
    <property type="entry name" value="PSI"/>
</dbReference>
<dbReference type="InterPro" id="IPR001627">
    <property type="entry name" value="Semap_dom"/>
</dbReference>
<dbReference type="InterPro" id="IPR036352">
    <property type="entry name" value="Semap_dom_sf"/>
</dbReference>
<dbReference type="InterPro" id="IPR001245">
    <property type="entry name" value="Ser-Thr/Tyr_kinase_cat_dom"/>
</dbReference>
<dbReference type="InterPro" id="IPR008266">
    <property type="entry name" value="Tyr_kinase_AS"/>
</dbReference>
<dbReference type="InterPro" id="IPR020635">
    <property type="entry name" value="Tyr_kinase_cat_dom"/>
</dbReference>
<dbReference type="InterPro" id="IPR016244">
    <property type="entry name" value="Tyr_kinase_HGF/MSP_rcpt"/>
</dbReference>
<dbReference type="InterPro" id="IPR015943">
    <property type="entry name" value="WD40/YVTN_repeat-like_dom_sf"/>
</dbReference>
<dbReference type="PANTHER" id="PTHR22625:SF61">
    <property type="entry name" value="HEPATOCYTE GROWTH FACTOR RECEPTOR"/>
    <property type="match status" value="1"/>
</dbReference>
<dbReference type="PANTHER" id="PTHR22625">
    <property type="entry name" value="PLEXIN"/>
    <property type="match status" value="1"/>
</dbReference>
<dbReference type="Pfam" id="PF07714">
    <property type="entry name" value="PK_Tyr_Ser-Thr"/>
    <property type="match status" value="1"/>
</dbReference>
<dbReference type="Pfam" id="PF01437">
    <property type="entry name" value="PSI"/>
    <property type="match status" value="1"/>
</dbReference>
<dbReference type="Pfam" id="PF01403">
    <property type="entry name" value="Sema"/>
    <property type="match status" value="1"/>
</dbReference>
<dbReference type="Pfam" id="PF01833">
    <property type="entry name" value="TIG"/>
    <property type="match status" value="3"/>
</dbReference>
<dbReference type="PIRSF" id="PIRSF000617">
    <property type="entry name" value="TyrPK_HGF-R"/>
    <property type="match status" value="1"/>
</dbReference>
<dbReference type="PRINTS" id="PR00109">
    <property type="entry name" value="TYRKINASE"/>
</dbReference>
<dbReference type="SMART" id="SM00429">
    <property type="entry name" value="IPT"/>
    <property type="match status" value="4"/>
</dbReference>
<dbReference type="SMART" id="SM00423">
    <property type="entry name" value="PSI"/>
    <property type="match status" value="1"/>
</dbReference>
<dbReference type="SMART" id="SM00630">
    <property type="entry name" value="Sema"/>
    <property type="match status" value="1"/>
</dbReference>
<dbReference type="SMART" id="SM00219">
    <property type="entry name" value="TyrKc"/>
    <property type="match status" value="1"/>
</dbReference>
<dbReference type="SUPFAM" id="SSF81296">
    <property type="entry name" value="E set domains"/>
    <property type="match status" value="3"/>
</dbReference>
<dbReference type="SUPFAM" id="SSF103575">
    <property type="entry name" value="Plexin repeat"/>
    <property type="match status" value="1"/>
</dbReference>
<dbReference type="SUPFAM" id="SSF56112">
    <property type="entry name" value="Protein kinase-like (PK-like)"/>
    <property type="match status" value="1"/>
</dbReference>
<dbReference type="SUPFAM" id="SSF101912">
    <property type="entry name" value="Sema domain"/>
    <property type="match status" value="1"/>
</dbReference>
<dbReference type="PROSITE" id="PS00107">
    <property type="entry name" value="PROTEIN_KINASE_ATP"/>
    <property type="match status" value="1"/>
</dbReference>
<dbReference type="PROSITE" id="PS50011">
    <property type="entry name" value="PROTEIN_KINASE_DOM"/>
    <property type="match status" value="1"/>
</dbReference>
<dbReference type="PROSITE" id="PS00109">
    <property type="entry name" value="PROTEIN_KINASE_TYR"/>
    <property type="match status" value="1"/>
</dbReference>
<dbReference type="PROSITE" id="PS51004">
    <property type="entry name" value="SEMA"/>
    <property type="match status" value="1"/>
</dbReference>
<accession>Q75ZY9</accession>
<accession>A0M8U9</accession>
<feature type="signal peptide" evidence="4">
    <location>
        <begin position="1"/>
        <end position="24"/>
    </location>
</feature>
<feature type="chain" id="PRO_0000024439" description="Hepatocyte growth factor receptor">
    <location>
        <begin position="25"/>
        <end position="1382"/>
    </location>
</feature>
<feature type="topological domain" description="Extracellular" evidence="4">
    <location>
        <begin position="25"/>
        <end position="935"/>
    </location>
</feature>
<feature type="transmembrane region" description="Helical" evidence="4">
    <location>
        <begin position="936"/>
        <end position="956"/>
    </location>
</feature>
<feature type="topological domain" description="Cytoplasmic" evidence="4">
    <location>
        <begin position="957"/>
        <end position="1379"/>
    </location>
</feature>
<feature type="domain" description="Sema" evidence="6">
    <location>
        <begin position="27"/>
        <end position="516"/>
    </location>
</feature>
<feature type="domain" description="IPT/TIG 1">
    <location>
        <begin position="564"/>
        <end position="656"/>
    </location>
</feature>
<feature type="domain" description="IPT/TIG 2">
    <location>
        <begin position="658"/>
        <end position="740"/>
    </location>
</feature>
<feature type="domain" description="IPT/TIG 3">
    <location>
        <begin position="743"/>
        <end position="837"/>
    </location>
</feature>
<feature type="domain" description="Protein kinase" evidence="5">
    <location>
        <begin position="1079"/>
        <end position="1346"/>
    </location>
</feature>
<feature type="region of interest" description="Interaction with RANBP9" evidence="1">
    <location>
        <begin position="1213"/>
        <end position="1382"/>
    </location>
</feature>
<feature type="region of interest" description="Interaction with MUC20" evidence="1">
    <location>
        <begin position="1321"/>
        <end position="1360"/>
    </location>
</feature>
<feature type="active site" description="Proton acceptor" evidence="5 7">
    <location>
        <position position="1205"/>
    </location>
</feature>
<feature type="binding site" evidence="5">
    <location>
        <begin position="1085"/>
        <end position="1093"/>
    </location>
    <ligand>
        <name>ATP</name>
        <dbReference type="ChEBI" id="CHEBI:30616"/>
    </ligand>
</feature>
<feature type="binding site" evidence="5">
    <location>
        <position position="1111"/>
    </location>
    <ligand>
        <name>ATP</name>
        <dbReference type="ChEBI" id="CHEBI:30616"/>
    </ligand>
</feature>
<feature type="site" description="Cleavage" evidence="4">
    <location>
        <begin position="308"/>
        <end position="309"/>
    </location>
</feature>
<feature type="modified residue" description="Phosphoserine" evidence="2">
    <location>
        <position position="967"/>
    </location>
</feature>
<feature type="modified residue" description="Phosphothreonine" evidence="2">
    <location>
        <position position="978"/>
    </location>
</feature>
<feature type="modified residue" description="Phosphoserine" evidence="2">
    <location>
        <position position="991"/>
    </location>
</feature>
<feature type="modified residue" description="Phosphoserine" evidence="2">
    <location>
        <position position="998"/>
    </location>
</feature>
<feature type="modified residue" description="Phosphoserine" evidence="2">
    <location>
        <position position="1001"/>
    </location>
</feature>
<feature type="modified residue" description="Phosphotyrosine" evidence="2">
    <location>
        <position position="1004"/>
    </location>
</feature>
<feature type="modified residue" description="Phosphotyrosine" evidence="2">
    <location>
        <position position="1231"/>
    </location>
</feature>
<feature type="modified residue" description="Phosphotyrosine; by autocatalysis" evidence="2">
    <location>
        <position position="1235"/>
    </location>
</feature>
<feature type="modified residue" description="Phosphotyrosine; by autocatalysis" evidence="2">
    <location>
        <position position="1236"/>
    </location>
</feature>
<feature type="modified residue" description="Phosphothreonine" evidence="2">
    <location>
        <position position="1290"/>
    </location>
</feature>
<feature type="modified residue" description="Phosphotyrosine; by autocatalysis" evidence="2">
    <location>
        <position position="1350"/>
    </location>
</feature>
<feature type="modified residue" description="Phosphotyrosine; by autocatalysis" evidence="2">
    <location>
        <position position="1357"/>
    </location>
</feature>
<feature type="modified residue" description="Phosphotyrosine" evidence="2">
    <location>
        <position position="1366"/>
    </location>
</feature>
<feature type="glycosylation site" description="N-linked (GlcNAc...) asparagine" evidence="4">
    <location>
        <position position="45"/>
    </location>
</feature>
<feature type="glycosylation site" description="N-linked (GlcNAc...) asparagine" evidence="4">
    <location>
        <position position="106"/>
    </location>
</feature>
<feature type="glycosylation site" description="N-linked (GlcNAc...) asparagine" evidence="4">
    <location>
        <position position="203"/>
    </location>
</feature>
<feature type="glycosylation site" description="N-linked (GlcNAc...) asparagine" evidence="4">
    <location>
        <position position="359"/>
    </location>
</feature>
<feature type="glycosylation site" description="N-linked (GlcNAc...) asparagine" evidence="4">
    <location>
        <position position="400"/>
    </location>
</feature>
<feature type="glycosylation site" description="N-linked (GlcNAc...) asparagine" evidence="4">
    <location>
        <position position="406"/>
    </location>
</feature>
<feature type="glycosylation site" description="O-linked (Man) threonine" evidence="2">
    <location>
        <position position="583"/>
    </location>
</feature>
<feature type="glycosylation site" description="N-linked (GlcNAc...) asparagine" evidence="4">
    <location>
        <position position="608"/>
    </location>
</feature>
<feature type="glycosylation site" description="N-linked (GlcNAc...) asparagine" evidence="4">
    <location>
        <position position="636"/>
    </location>
</feature>
<feature type="glycosylation site" description="O-linked (Man) threonine" evidence="2">
    <location>
        <position position="677"/>
    </location>
</feature>
<feature type="glycosylation site" description="O-linked (Man) threonine" evidence="2">
    <location>
        <position position="762"/>
    </location>
</feature>
<feature type="glycosylation site" description="N-linked (GlcNAc...) asparagine" evidence="4">
    <location>
        <position position="786"/>
    </location>
</feature>
<feature type="glycosylation site" description="N-linked (GlcNAc...) asparagine" evidence="4">
    <location>
        <position position="880"/>
    </location>
</feature>
<feature type="glycosylation site" description="N-linked (GlcNAc...) asparagine" evidence="4">
    <location>
        <position position="931"/>
    </location>
</feature>
<feature type="disulfide bond" evidence="6">
    <location>
        <begin position="95"/>
        <end position="101"/>
    </location>
</feature>
<feature type="disulfide bond" evidence="6">
    <location>
        <begin position="98"/>
        <end position="160"/>
    </location>
</feature>
<feature type="disulfide bond" evidence="6">
    <location>
        <begin position="133"/>
        <end position="141"/>
    </location>
</feature>
<feature type="disulfide bond" evidence="6">
    <location>
        <begin position="173"/>
        <end position="176"/>
    </location>
</feature>
<feature type="disulfide bond" evidence="6">
    <location>
        <begin position="299"/>
        <end position="364"/>
    </location>
</feature>
<feature type="disulfide bond" evidence="6">
    <location>
        <begin position="386"/>
        <end position="398"/>
    </location>
</feature>
<feature type="disulfide bond" evidence="6">
    <location>
        <begin position="521"/>
        <end position="539"/>
    </location>
</feature>
<feature type="disulfide bond" evidence="6">
    <location>
        <begin position="527"/>
        <end position="562"/>
    </location>
</feature>
<feature type="disulfide bond" evidence="6">
    <location>
        <begin position="530"/>
        <end position="546"/>
    </location>
</feature>
<feature type="disulfide bond" evidence="6">
    <location>
        <begin position="542"/>
        <end position="552"/>
    </location>
</feature>
<evidence type="ECO:0000250" key="1"/>
<evidence type="ECO:0000250" key="2">
    <source>
        <dbReference type="UniProtKB" id="P08581"/>
    </source>
</evidence>
<evidence type="ECO:0000250" key="3">
    <source>
        <dbReference type="UniProtKB" id="P16056"/>
    </source>
</evidence>
<evidence type="ECO:0000255" key="4"/>
<evidence type="ECO:0000255" key="5">
    <source>
        <dbReference type="PROSITE-ProRule" id="PRU00159"/>
    </source>
</evidence>
<evidence type="ECO:0000255" key="6">
    <source>
        <dbReference type="PROSITE-ProRule" id="PRU00352"/>
    </source>
</evidence>
<evidence type="ECO:0000255" key="7">
    <source>
        <dbReference type="PROSITE-ProRule" id="PRU10028"/>
    </source>
</evidence>
<evidence type="ECO:0000269" key="8">
    <source>
    </source>
</evidence>
<evidence type="ECO:0000269" key="9">
    <source>
    </source>
</evidence>
<evidence type="ECO:0000305" key="10"/>
<evidence type="ECO:0000305" key="11">
    <source>
    </source>
</evidence>